<accession>B6JJP8</accession>
<accession>F8BWX2</accession>
<reference key="1">
    <citation type="journal article" date="2008" name="J. Bacteriol.">
        <title>Genome sequence of the chemolithoautotrophic bacterium Oligotropha carboxidovorans OM5T.</title>
        <authorList>
            <person name="Paul D."/>
            <person name="Bridges S."/>
            <person name="Burgess S.C."/>
            <person name="Dandass Y."/>
            <person name="Lawrence M.L."/>
        </authorList>
    </citation>
    <scope>NUCLEOTIDE SEQUENCE [LARGE SCALE GENOMIC DNA]</scope>
    <source>
        <strain>ATCC 49405 / DSM 1227 / KCTC 32145 / OM5</strain>
    </source>
</reference>
<reference key="2">
    <citation type="journal article" date="2011" name="J. Bacteriol.">
        <title>Complete genome sequences of the chemolithoautotrophic Oligotropha carboxidovorans strains OM4 and OM5.</title>
        <authorList>
            <person name="Volland S."/>
            <person name="Rachinger M."/>
            <person name="Strittmatter A."/>
            <person name="Daniel R."/>
            <person name="Gottschalk G."/>
            <person name="Meyer O."/>
        </authorList>
    </citation>
    <scope>NUCLEOTIDE SEQUENCE [LARGE SCALE GENOMIC DNA]</scope>
    <source>
        <strain>ATCC 49405 / DSM 1227 / KCTC 32145 / OM5</strain>
    </source>
</reference>
<gene>
    <name evidence="1" type="primary">def</name>
    <name type="ordered locus">OCAR_7540</name>
    <name type="ordered locus">OCA5_c06000</name>
</gene>
<feature type="chain" id="PRO_1000097327" description="Peptide deformylase">
    <location>
        <begin position="1"/>
        <end position="171"/>
    </location>
</feature>
<feature type="active site" evidence="1">
    <location>
        <position position="137"/>
    </location>
</feature>
<feature type="binding site" evidence="1">
    <location>
        <position position="94"/>
    </location>
    <ligand>
        <name>Fe cation</name>
        <dbReference type="ChEBI" id="CHEBI:24875"/>
    </ligand>
</feature>
<feature type="binding site" evidence="1">
    <location>
        <position position="136"/>
    </location>
    <ligand>
        <name>Fe cation</name>
        <dbReference type="ChEBI" id="CHEBI:24875"/>
    </ligand>
</feature>
<feature type="binding site" evidence="1">
    <location>
        <position position="140"/>
    </location>
    <ligand>
        <name>Fe cation</name>
        <dbReference type="ChEBI" id="CHEBI:24875"/>
    </ligand>
</feature>
<keyword id="KW-0378">Hydrolase</keyword>
<keyword id="KW-0408">Iron</keyword>
<keyword id="KW-0479">Metal-binding</keyword>
<keyword id="KW-0648">Protein biosynthesis</keyword>
<keyword id="KW-1185">Reference proteome</keyword>
<proteinExistence type="inferred from homology"/>
<name>DEF_AFIC5</name>
<sequence length="171" mass="19367">MAIREIISIPDKRLRRVSEPVEKITSEVRALAEDMFETMYDAPGIGLAAIQVAVPLRLITMDLAKKEGESAPRVFINPEILSKSEDIAVYEEGCLSIPEYYEEVERPASVRVRFMDLEGEVHEEDAEGLFATCIQHEIDHLNGVLFIDYLSKLKRDRVMKKFTKAAKLAAK</sequence>
<dbReference type="EC" id="3.5.1.88" evidence="1"/>
<dbReference type="EMBL" id="CP001196">
    <property type="protein sequence ID" value="ACI94642.1"/>
    <property type="molecule type" value="Genomic_DNA"/>
</dbReference>
<dbReference type="EMBL" id="CP002826">
    <property type="protein sequence ID" value="AEI05324.1"/>
    <property type="molecule type" value="Genomic_DNA"/>
</dbReference>
<dbReference type="RefSeq" id="WP_012564666.1">
    <property type="nucleotide sequence ID" value="NC_015684.1"/>
</dbReference>
<dbReference type="SMR" id="B6JJP8"/>
<dbReference type="STRING" id="504832.OCA5_c06000"/>
<dbReference type="KEGG" id="oca:OCAR_7540"/>
<dbReference type="KEGG" id="ocg:OCA5_c06000"/>
<dbReference type="PATRIC" id="fig|504832.7.peg.628"/>
<dbReference type="eggNOG" id="COG0242">
    <property type="taxonomic scope" value="Bacteria"/>
</dbReference>
<dbReference type="HOGENOM" id="CLU_061901_2_0_5"/>
<dbReference type="OrthoDB" id="9804313at2"/>
<dbReference type="Proteomes" id="UP000007730">
    <property type="component" value="Chromosome"/>
</dbReference>
<dbReference type="GO" id="GO:0046872">
    <property type="term" value="F:metal ion binding"/>
    <property type="evidence" value="ECO:0007669"/>
    <property type="project" value="UniProtKB-KW"/>
</dbReference>
<dbReference type="GO" id="GO:0042586">
    <property type="term" value="F:peptide deformylase activity"/>
    <property type="evidence" value="ECO:0007669"/>
    <property type="project" value="UniProtKB-UniRule"/>
</dbReference>
<dbReference type="GO" id="GO:0043686">
    <property type="term" value="P:co-translational protein modification"/>
    <property type="evidence" value="ECO:0007669"/>
    <property type="project" value="TreeGrafter"/>
</dbReference>
<dbReference type="GO" id="GO:0006412">
    <property type="term" value="P:translation"/>
    <property type="evidence" value="ECO:0007669"/>
    <property type="project" value="UniProtKB-UniRule"/>
</dbReference>
<dbReference type="CDD" id="cd00487">
    <property type="entry name" value="Pep_deformylase"/>
    <property type="match status" value="1"/>
</dbReference>
<dbReference type="FunFam" id="3.90.45.10:FF:000001">
    <property type="entry name" value="Peptide deformylase"/>
    <property type="match status" value="1"/>
</dbReference>
<dbReference type="Gene3D" id="3.90.45.10">
    <property type="entry name" value="Peptide deformylase"/>
    <property type="match status" value="1"/>
</dbReference>
<dbReference type="HAMAP" id="MF_00163">
    <property type="entry name" value="Pep_deformylase"/>
    <property type="match status" value="1"/>
</dbReference>
<dbReference type="InterPro" id="IPR023635">
    <property type="entry name" value="Peptide_deformylase"/>
</dbReference>
<dbReference type="InterPro" id="IPR036821">
    <property type="entry name" value="Peptide_deformylase_sf"/>
</dbReference>
<dbReference type="NCBIfam" id="TIGR00079">
    <property type="entry name" value="pept_deformyl"/>
    <property type="match status" value="1"/>
</dbReference>
<dbReference type="NCBIfam" id="NF001159">
    <property type="entry name" value="PRK00150.1-3"/>
    <property type="match status" value="1"/>
</dbReference>
<dbReference type="PANTHER" id="PTHR10458">
    <property type="entry name" value="PEPTIDE DEFORMYLASE"/>
    <property type="match status" value="1"/>
</dbReference>
<dbReference type="PANTHER" id="PTHR10458:SF22">
    <property type="entry name" value="PEPTIDE DEFORMYLASE"/>
    <property type="match status" value="1"/>
</dbReference>
<dbReference type="Pfam" id="PF01327">
    <property type="entry name" value="Pep_deformylase"/>
    <property type="match status" value="1"/>
</dbReference>
<dbReference type="PIRSF" id="PIRSF004749">
    <property type="entry name" value="Pep_def"/>
    <property type="match status" value="1"/>
</dbReference>
<dbReference type="PRINTS" id="PR01576">
    <property type="entry name" value="PDEFORMYLASE"/>
</dbReference>
<dbReference type="SUPFAM" id="SSF56420">
    <property type="entry name" value="Peptide deformylase"/>
    <property type="match status" value="1"/>
</dbReference>
<evidence type="ECO:0000255" key="1">
    <source>
        <dbReference type="HAMAP-Rule" id="MF_00163"/>
    </source>
</evidence>
<organism>
    <name type="scientific">Afipia carboxidovorans (strain ATCC 49405 / DSM 1227 / KCTC 32145 / OM5)</name>
    <name type="common">Oligotropha carboxidovorans</name>
    <dbReference type="NCBI Taxonomy" id="504832"/>
    <lineage>
        <taxon>Bacteria</taxon>
        <taxon>Pseudomonadati</taxon>
        <taxon>Pseudomonadota</taxon>
        <taxon>Alphaproteobacteria</taxon>
        <taxon>Hyphomicrobiales</taxon>
        <taxon>Nitrobacteraceae</taxon>
        <taxon>Afipia</taxon>
    </lineage>
</organism>
<comment type="function">
    <text evidence="1">Removes the formyl group from the N-terminal Met of newly synthesized proteins. Requires at least a dipeptide for an efficient rate of reaction. N-terminal L-methionine is a prerequisite for activity but the enzyme has broad specificity at other positions.</text>
</comment>
<comment type="catalytic activity">
    <reaction evidence="1">
        <text>N-terminal N-formyl-L-methionyl-[peptide] + H2O = N-terminal L-methionyl-[peptide] + formate</text>
        <dbReference type="Rhea" id="RHEA:24420"/>
        <dbReference type="Rhea" id="RHEA-COMP:10639"/>
        <dbReference type="Rhea" id="RHEA-COMP:10640"/>
        <dbReference type="ChEBI" id="CHEBI:15377"/>
        <dbReference type="ChEBI" id="CHEBI:15740"/>
        <dbReference type="ChEBI" id="CHEBI:49298"/>
        <dbReference type="ChEBI" id="CHEBI:64731"/>
        <dbReference type="EC" id="3.5.1.88"/>
    </reaction>
</comment>
<comment type="cofactor">
    <cofactor evidence="1">
        <name>Fe(2+)</name>
        <dbReference type="ChEBI" id="CHEBI:29033"/>
    </cofactor>
    <text evidence="1">Binds 1 Fe(2+) ion.</text>
</comment>
<comment type="similarity">
    <text evidence="1">Belongs to the polypeptide deformylase family.</text>
</comment>
<protein>
    <recommendedName>
        <fullName evidence="1">Peptide deformylase</fullName>
        <shortName evidence="1">PDF</shortName>
        <ecNumber evidence="1">3.5.1.88</ecNumber>
    </recommendedName>
    <alternativeName>
        <fullName evidence="1">Polypeptide deformylase</fullName>
    </alternativeName>
</protein>